<dbReference type="EC" id="1.4.4.2" evidence="2"/>
<dbReference type="EMBL" id="AE005674">
    <property type="protein sequence ID" value="AAN44373.1"/>
    <property type="molecule type" value="Genomic_DNA"/>
</dbReference>
<dbReference type="EMBL" id="AE014073">
    <property type="protein sequence ID" value="AAP18195.1"/>
    <property type="molecule type" value="Genomic_DNA"/>
</dbReference>
<dbReference type="RefSeq" id="NP_708666.1">
    <property type="nucleotide sequence ID" value="NC_004337.2"/>
</dbReference>
<dbReference type="RefSeq" id="WP_000195082.1">
    <property type="nucleotide sequence ID" value="NZ_WPGW01000018.1"/>
</dbReference>
<dbReference type="SMR" id="Q83QA2"/>
<dbReference type="STRING" id="198214.SF2889"/>
<dbReference type="PaxDb" id="198214-SF2889"/>
<dbReference type="GeneID" id="1025878"/>
<dbReference type="KEGG" id="sfl:SF2889"/>
<dbReference type="KEGG" id="sfx:S3088"/>
<dbReference type="PATRIC" id="fig|198214.7.peg.3438"/>
<dbReference type="HOGENOM" id="CLU_004620_1_1_6"/>
<dbReference type="Proteomes" id="UP000001006">
    <property type="component" value="Chromosome"/>
</dbReference>
<dbReference type="Proteomes" id="UP000002673">
    <property type="component" value="Chromosome"/>
</dbReference>
<dbReference type="GO" id="GO:0005829">
    <property type="term" value="C:cytosol"/>
    <property type="evidence" value="ECO:0007669"/>
    <property type="project" value="TreeGrafter"/>
</dbReference>
<dbReference type="GO" id="GO:0005960">
    <property type="term" value="C:glycine cleavage complex"/>
    <property type="evidence" value="ECO:0007669"/>
    <property type="project" value="TreeGrafter"/>
</dbReference>
<dbReference type="GO" id="GO:0016594">
    <property type="term" value="F:glycine binding"/>
    <property type="evidence" value="ECO:0007669"/>
    <property type="project" value="TreeGrafter"/>
</dbReference>
<dbReference type="GO" id="GO:0004375">
    <property type="term" value="F:glycine dehydrogenase (decarboxylating) activity"/>
    <property type="evidence" value="ECO:0007669"/>
    <property type="project" value="UniProtKB-EC"/>
</dbReference>
<dbReference type="GO" id="GO:0030170">
    <property type="term" value="F:pyridoxal phosphate binding"/>
    <property type="evidence" value="ECO:0007669"/>
    <property type="project" value="TreeGrafter"/>
</dbReference>
<dbReference type="GO" id="GO:0019464">
    <property type="term" value="P:glycine decarboxylation via glycine cleavage system"/>
    <property type="evidence" value="ECO:0007669"/>
    <property type="project" value="UniProtKB-UniRule"/>
</dbReference>
<dbReference type="CDD" id="cd00613">
    <property type="entry name" value="GDC-P"/>
    <property type="match status" value="2"/>
</dbReference>
<dbReference type="FunFam" id="3.40.640.10:FF:000005">
    <property type="entry name" value="Glycine dehydrogenase (decarboxylating), mitochondrial"/>
    <property type="match status" value="1"/>
</dbReference>
<dbReference type="FunFam" id="3.90.1150.10:FF:000007">
    <property type="entry name" value="Glycine dehydrogenase (decarboxylating), mitochondrial"/>
    <property type="match status" value="1"/>
</dbReference>
<dbReference type="FunFam" id="3.40.640.10:FF:000007">
    <property type="entry name" value="glycine dehydrogenase (Decarboxylating), mitochondrial"/>
    <property type="match status" value="1"/>
</dbReference>
<dbReference type="Gene3D" id="3.90.1150.10">
    <property type="entry name" value="Aspartate Aminotransferase, domain 1"/>
    <property type="match status" value="1"/>
</dbReference>
<dbReference type="Gene3D" id="3.40.640.10">
    <property type="entry name" value="Type I PLP-dependent aspartate aminotransferase-like (Major domain)"/>
    <property type="match status" value="2"/>
</dbReference>
<dbReference type="HAMAP" id="MF_00711">
    <property type="entry name" value="GcvP"/>
    <property type="match status" value="1"/>
</dbReference>
<dbReference type="InterPro" id="IPR003437">
    <property type="entry name" value="GcvP"/>
</dbReference>
<dbReference type="InterPro" id="IPR049316">
    <property type="entry name" value="GDC-P_C"/>
</dbReference>
<dbReference type="InterPro" id="IPR049315">
    <property type="entry name" value="GDC-P_N"/>
</dbReference>
<dbReference type="InterPro" id="IPR020581">
    <property type="entry name" value="GDC_P"/>
</dbReference>
<dbReference type="InterPro" id="IPR015424">
    <property type="entry name" value="PyrdxlP-dep_Trfase"/>
</dbReference>
<dbReference type="InterPro" id="IPR015421">
    <property type="entry name" value="PyrdxlP-dep_Trfase_major"/>
</dbReference>
<dbReference type="InterPro" id="IPR015422">
    <property type="entry name" value="PyrdxlP-dep_Trfase_small"/>
</dbReference>
<dbReference type="NCBIfam" id="TIGR00461">
    <property type="entry name" value="gcvP"/>
    <property type="match status" value="1"/>
</dbReference>
<dbReference type="NCBIfam" id="NF003346">
    <property type="entry name" value="PRK04366.1"/>
    <property type="match status" value="1"/>
</dbReference>
<dbReference type="PANTHER" id="PTHR11773:SF13">
    <property type="entry name" value="GLYCINE DEHYDROGENASE (DECARBOXYLATING)"/>
    <property type="match status" value="1"/>
</dbReference>
<dbReference type="PANTHER" id="PTHR11773">
    <property type="entry name" value="GLYCINE DEHYDROGENASE, DECARBOXYLATING"/>
    <property type="match status" value="1"/>
</dbReference>
<dbReference type="Pfam" id="PF21478">
    <property type="entry name" value="GcvP2_C"/>
    <property type="match status" value="1"/>
</dbReference>
<dbReference type="Pfam" id="PF02347">
    <property type="entry name" value="GDC-P"/>
    <property type="match status" value="2"/>
</dbReference>
<dbReference type="SUPFAM" id="SSF53383">
    <property type="entry name" value="PLP-dependent transferases"/>
    <property type="match status" value="2"/>
</dbReference>
<reference key="1">
    <citation type="journal article" date="2002" name="Nucleic Acids Res.">
        <title>Genome sequence of Shigella flexneri 2a: insights into pathogenicity through comparison with genomes of Escherichia coli K12 and O157.</title>
        <authorList>
            <person name="Jin Q."/>
            <person name="Yuan Z."/>
            <person name="Xu J."/>
            <person name="Wang Y."/>
            <person name="Shen Y."/>
            <person name="Lu W."/>
            <person name="Wang J."/>
            <person name="Liu H."/>
            <person name="Yang J."/>
            <person name="Yang F."/>
            <person name="Zhang X."/>
            <person name="Zhang J."/>
            <person name="Yang G."/>
            <person name="Wu H."/>
            <person name="Qu D."/>
            <person name="Dong J."/>
            <person name="Sun L."/>
            <person name="Xue Y."/>
            <person name="Zhao A."/>
            <person name="Gao Y."/>
            <person name="Zhu J."/>
            <person name="Kan B."/>
            <person name="Ding K."/>
            <person name="Chen S."/>
            <person name="Cheng H."/>
            <person name="Yao Z."/>
            <person name="He B."/>
            <person name="Chen R."/>
            <person name="Ma D."/>
            <person name="Qiang B."/>
            <person name="Wen Y."/>
            <person name="Hou Y."/>
            <person name="Yu J."/>
        </authorList>
    </citation>
    <scope>NUCLEOTIDE SEQUENCE [LARGE SCALE GENOMIC DNA]</scope>
    <source>
        <strain>301 / Serotype 2a</strain>
    </source>
</reference>
<reference key="2">
    <citation type="journal article" date="2003" name="Infect. Immun.">
        <title>Complete genome sequence and comparative genomics of Shigella flexneri serotype 2a strain 2457T.</title>
        <authorList>
            <person name="Wei J."/>
            <person name="Goldberg M.B."/>
            <person name="Burland V."/>
            <person name="Venkatesan M.M."/>
            <person name="Deng W."/>
            <person name="Fournier G."/>
            <person name="Mayhew G.F."/>
            <person name="Plunkett G. III"/>
            <person name="Rose D.J."/>
            <person name="Darling A."/>
            <person name="Mau B."/>
            <person name="Perna N.T."/>
            <person name="Payne S.M."/>
            <person name="Runyen-Janecky L.J."/>
            <person name="Zhou S."/>
            <person name="Schwartz D.C."/>
            <person name="Blattner F.R."/>
        </authorList>
    </citation>
    <scope>NUCLEOTIDE SEQUENCE [LARGE SCALE GENOMIC DNA]</scope>
    <source>
        <strain>ATCC 700930 / 2457T / Serotype 2a</strain>
    </source>
</reference>
<keyword id="KW-0560">Oxidoreductase</keyword>
<keyword id="KW-0663">Pyridoxal phosphate</keyword>
<keyword id="KW-1185">Reference proteome</keyword>
<sequence length="957" mass="104366">MTQTLSQLENSGAFIERHIGPDAAQQQEMLNAVGAQSLNALTGQIVPKDIQLATPPQVGAPATEYAALAELKAIASRNKRFTSYIGMGYTAVQLPPVILRNMLENPGWYTAYTPYQPEVSQGRLEALLNFQQVTLDLTGLDMASASLLDEATAAAEAMAMAKRVSKLKNANRFFVASNVHPQTLDVVRTRAETFGFEVIVDDAQKVLDHQDVFGVLLQQVGTTGEIHDYTALISELKSRKIVVSVAADIMALVLLTAPGKQGADIVFGSAQRFGVPMGYGGPHAAFFAAKDEYKRSMPGRIIGVSKDAAGNTALRMAMQTREQHIRREKANSNICTSQVLLANIASLYAVYHGPVGLKRIANRIHRLTDILAAGLQQKGLKLRHAHYFDTLCVEVADKAGVLTRAEAAEINLRSDILNAVGITLDETTTRENVMQLFSVLLGDNHGLEIDTLDKDVAHDSRSIQPAMLRDDEILTHPVFNRYHSETEMMRYMHSLERKDLALNQAMIPLGSCTMKLNAAAEMIPITWTEFAELHPFCPPEQAEGYQQMIAQLADWLVKLTGYDAVCMQPNSGAQGEYAGLLAIRHYHESRNEGHRDICLIPASAHGTNPASAHMAGMQVVVVACDKNGNIDLTDLRAKAEQAGDNLSCIMVTYPSTHGVYEETIREVCEVVHQFGGQVYLDGANMNAQVGITSPGFIGADVSHLNLHKTFCIPHGGGGPGMGPIGVKAHLAPFVPGHSVVQIEGMLTRQGAVSAAPFGSASILPISWMYIRMMGAEGLKKASQVAILNANYIASRLQDAFPVLYTGRDGRVAHECILDIRPLKEETGISELDIAKRLIDYGFHAPTMSFPVAGTLMVEPTESESKVELDRFIDAMLAIRAEIDQVKAGVWPLEDNPLVNAPHIQSELVAEWAHPYSREVAVFPAGVADKYWPTVKRLDDVYGDRNLFCSCVPISEYQ</sequence>
<accession>Q83QA2</accession>
<name>GCSP_SHIFL</name>
<evidence type="ECO:0000250" key="1"/>
<evidence type="ECO:0000255" key="2">
    <source>
        <dbReference type="HAMAP-Rule" id="MF_00711"/>
    </source>
</evidence>
<organism>
    <name type="scientific">Shigella flexneri</name>
    <dbReference type="NCBI Taxonomy" id="623"/>
    <lineage>
        <taxon>Bacteria</taxon>
        <taxon>Pseudomonadati</taxon>
        <taxon>Pseudomonadota</taxon>
        <taxon>Gammaproteobacteria</taxon>
        <taxon>Enterobacterales</taxon>
        <taxon>Enterobacteriaceae</taxon>
        <taxon>Shigella</taxon>
    </lineage>
</organism>
<proteinExistence type="inferred from homology"/>
<protein>
    <recommendedName>
        <fullName evidence="2">Glycine dehydrogenase (decarboxylating)</fullName>
        <ecNumber evidence="2">1.4.4.2</ecNumber>
    </recommendedName>
    <alternativeName>
        <fullName evidence="2">Glycine cleavage system P-protein</fullName>
    </alternativeName>
    <alternativeName>
        <fullName evidence="2">Glycine decarboxylase</fullName>
    </alternativeName>
    <alternativeName>
        <fullName evidence="2">Glycine dehydrogenase (aminomethyl-transferring)</fullName>
    </alternativeName>
</protein>
<feature type="initiator methionine" description="Removed" evidence="1">
    <location>
        <position position="1"/>
    </location>
</feature>
<feature type="chain" id="PRO_0000166937" description="Glycine dehydrogenase (decarboxylating)">
    <location>
        <begin position="2"/>
        <end position="957"/>
    </location>
</feature>
<feature type="modified residue" description="N6-(pyridoxal phosphate)lysine" evidence="2">
    <location>
        <position position="708"/>
    </location>
</feature>
<gene>
    <name evidence="2" type="primary">gcvP</name>
    <name type="ordered locus">SF2889</name>
    <name type="ordered locus">S3088</name>
</gene>
<comment type="function">
    <text evidence="2">The glycine cleavage system catalyzes the degradation of glycine. The P protein binds the alpha-amino group of glycine through its pyridoxal phosphate cofactor; CO(2) is released and the remaining methylamine moiety is then transferred to the lipoamide cofactor of the H protein.</text>
</comment>
<comment type="catalytic activity">
    <reaction evidence="2">
        <text>N(6)-[(R)-lipoyl]-L-lysyl-[glycine-cleavage complex H protein] + glycine + H(+) = N(6)-[(R)-S(8)-aminomethyldihydrolipoyl]-L-lysyl-[glycine-cleavage complex H protein] + CO2</text>
        <dbReference type="Rhea" id="RHEA:24304"/>
        <dbReference type="Rhea" id="RHEA-COMP:10494"/>
        <dbReference type="Rhea" id="RHEA-COMP:10495"/>
        <dbReference type="ChEBI" id="CHEBI:15378"/>
        <dbReference type="ChEBI" id="CHEBI:16526"/>
        <dbReference type="ChEBI" id="CHEBI:57305"/>
        <dbReference type="ChEBI" id="CHEBI:83099"/>
        <dbReference type="ChEBI" id="CHEBI:83143"/>
        <dbReference type="EC" id="1.4.4.2"/>
    </reaction>
</comment>
<comment type="cofactor">
    <cofactor evidence="2">
        <name>pyridoxal 5'-phosphate</name>
        <dbReference type="ChEBI" id="CHEBI:597326"/>
    </cofactor>
</comment>
<comment type="subunit">
    <text evidence="2">The glycine cleavage system is composed of four proteins: P, T, L and H.</text>
</comment>
<comment type="similarity">
    <text evidence="2">Belongs to the GcvP family.</text>
</comment>